<keyword id="KW-0012">Acyltransferase</keyword>
<keyword id="KW-0808">Transferase</keyword>
<accession>O06059</accession>
<evidence type="ECO:0000255" key="1">
    <source>
        <dbReference type="PROSITE-ProRule" id="PRU00532"/>
    </source>
</evidence>
<evidence type="ECO:0000269" key="2">
    <source>
    </source>
</evidence>
<evidence type="ECO:0000305" key="3"/>
<sequence length="172" mass="19386">METKMTGTNGSVDSIVFDKPTVEDGADMWELVKNSTLDLNSSYKYIMMCEFFAETCVVAKENDELVGFVTAFIPPEKQDTVFVWQVGVDTSQRGKGLASRLLNALLERDVCENVLYLEATITPSNEASQALFKKLAQKRETEVTVSECFTEDLFPDDEHEEELTFRIGPFTK</sequence>
<gene>
    <name type="primary">ectA</name>
</gene>
<proteinExistence type="inferred from homology"/>
<comment type="function">
    <text evidence="2">Catalyzes the acetylation of L-2,4-diaminobutyrate (DABA) to gamma-N-acetyl-alpha,gamma-diaminobutyric acid (ADABA) with acetyl coenzyme A.</text>
</comment>
<comment type="catalytic activity">
    <reaction>
        <text>L-2,4-diaminobutanoate + acetyl-CoA = (2S)-4-acetamido-2-aminobutanoate + CoA + H(+)</text>
        <dbReference type="Rhea" id="RHEA:16901"/>
        <dbReference type="ChEBI" id="CHEBI:15378"/>
        <dbReference type="ChEBI" id="CHEBI:57287"/>
        <dbReference type="ChEBI" id="CHEBI:57288"/>
        <dbReference type="ChEBI" id="CHEBI:58761"/>
        <dbReference type="ChEBI" id="CHEBI:58929"/>
        <dbReference type="EC" id="2.3.1.178"/>
    </reaction>
</comment>
<comment type="pathway">
    <text>Amine and polyamine biosynthesis; ectoine biosynthesis; L-ectoine from L-aspartate 4-semialdehyde: step 2/3.</text>
</comment>
<comment type="similarity">
    <text evidence="3">Belongs to the acetyltransferase family. EctA subfamily.</text>
</comment>
<name>ECTA_MARHA</name>
<protein>
    <recommendedName>
        <fullName>L-2,4-diaminobutyric acid acetyltransferase</fullName>
        <shortName>DABA acetyltransferase</shortName>
        <ecNumber>2.3.1.178</ecNumber>
    </recommendedName>
</protein>
<feature type="chain" id="PRO_0000220087" description="L-2,4-diaminobutyric acid acetyltransferase">
    <location>
        <begin position="1"/>
        <end position="172"/>
    </location>
</feature>
<feature type="domain" description="N-acetyltransferase" evidence="1">
    <location>
        <begin position="15"/>
        <end position="166"/>
    </location>
</feature>
<organism>
    <name type="scientific">Marinococcus halophilus</name>
    <dbReference type="NCBI Taxonomy" id="1371"/>
    <lineage>
        <taxon>Bacteria</taxon>
        <taxon>Bacillati</taxon>
        <taxon>Bacillota</taxon>
        <taxon>Bacilli</taxon>
        <taxon>Bacillales</taxon>
        <taxon>Bacillaceae</taxon>
        <taxon>Marinococcus</taxon>
    </lineage>
</organism>
<dbReference type="EC" id="2.3.1.178"/>
<dbReference type="EMBL" id="U66614">
    <property type="protein sequence ID" value="AAB57633.1"/>
    <property type="molecule type" value="Genomic_DNA"/>
</dbReference>
<dbReference type="RefSeq" id="WP_233133499.1">
    <property type="nucleotide sequence ID" value="NZ_BJUN01000035.1"/>
</dbReference>
<dbReference type="SMR" id="O06059"/>
<dbReference type="STRING" id="1371.GCA_900166605_00961"/>
<dbReference type="KEGG" id="ag:AAB57633"/>
<dbReference type="UniPathway" id="UPA00067">
    <property type="reaction ID" value="UER00122"/>
</dbReference>
<dbReference type="GO" id="GO:0033816">
    <property type="term" value="F:diaminobutyrate acetyltransferase activity"/>
    <property type="evidence" value="ECO:0007669"/>
    <property type="project" value="UniProtKB-EC"/>
</dbReference>
<dbReference type="GO" id="GO:0019491">
    <property type="term" value="P:ectoine biosynthetic process"/>
    <property type="evidence" value="ECO:0007669"/>
    <property type="project" value="UniProtKB-UniPathway"/>
</dbReference>
<dbReference type="CDD" id="cd04301">
    <property type="entry name" value="NAT_SF"/>
    <property type="match status" value="1"/>
</dbReference>
<dbReference type="Gene3D" id="3.40.630.30">
    <property type="match status" value="1"/>
</dbReference>
<dbReference type="InterPro" id="IPR016181">
    <property type="entry name" value="Acyl_CoA_acyltransferase"/>
</dbReference>
<dbReference type="InterPro" id="IPR012772">
    <property type="entry name" value="Ectoine_EctA"/>
</dbReference>
<dbReference type="InterPro" id="IPR000182">
    <property type="entry name" value="GNAT_dom"/>
</dbReference>
<dbReference type="NCBIfam" id="TIGR02406">
    <property type="entry name" value="ectoine_EctA"/>
    <property type="match status" value="1"/>
</dbReference>
<dbReference type="Pfam" id="PF00583">
    <property type="entry name" value="Acetyltransf_1"/>
    <property type="match status" value="1"/>
</dbReference>
<dbReference type="SUPFAM" id="SSF55729">
    <property type="entry name" value="Acyl-CoA N-acyltransferases (Nat)"/>
    <property type="match status" value="1"/>
</dbReference>
<dbReference type="PROSITE" id="PS51186">
    <property type="entry name" value="GNAT"/>
    <property type="match status" value="1"/>
</dbReference>
<reference key="1">
    <citation type="journal article" date="1997" name="Microbiology">
        <title>Characterization of genes for the biosynthesis of the compatible solute ectoine from Marinococcus halophilus and osmoregulated expression in Escherichia coli.</title>
        <authorList>
            <person name="Louis P."/>
            <person name="Galinski E.A."/>
        </authorList>
    </citation>
    <scope>NUCLEOTIDE SEQUENCE [GENOMIC DNA]</scope>
    <scope>FUNCTION</scope>
    <source>
        <strain>ATCC 27964 / DSM 20408 / CIP 140819 / JCM 2479 / NBRC 102359 / NCIMB 13496 / CCM 2706</strain>
    </source>
</reference>